<protein>
    <recommendedName>
        <fullName evidence="8">Self-sufficient cytochrome P450 monooxygenase CYP505E3</fullName>
    </recommendedName>
    <alternativeName>
        <fullName evidence="8">Bifunctional cytochrome P450/NADPH--P450 reductase CYP505E3</fullName>
    </alternativeName>
    <domain>
        <recommendedName>
            <fullName evidence="8">Cytochrome P450 monooxygenase</fullName>
            <ecNumber evidence="6">1.14.14.1</ecNumber>
        </recommendedName>
    </domain>
    <domain>
        <recommendedName>
            <fullName evidence="8">NADPH--cytochrome P450 reductase</fullName>
            <ecNumber evidence="6">1.6.2.4</ecNumber>
        </recommendedName>
    </domain>
</protein>
<dbReference type="EC" id="1.14.14.1" evidence="6"/>
<dbReference type="EC" id="1.6.2.4" evidence="6"/>
<dbReference type="EMBL" id="CH476594">
    <property type="protein sequence ID" value="EAU38711.1"/>
    <property type="molecule type" value="Genomic_DNA"/>
</dbReference>
<dbReference type="RefSeq" id="XP_001210151.1">
    <property type="nucleotide sequence ID" value="XM_001210151.1"/>
</dbReference>
<dbReference type="SMR" id="Q0D1W9"/>
<dbReference type="STRING" id="341663.Q0D1W9"/>
<dbReference type="EnsemblFungi" id="EAU38711">
    <property type="protein sequence ID" value="EAU38711"/>
    <property type="gene ID" value="ATEG_00065"/>
</dbReference>
<dbReference type="GeneID" id="4354821"/>
<dbReference type="VEuPathDB" id="FungiDB:ATEG_00065"/>
<dbReference type="eggNOG" id="KOG0157">
    <property type="taxonomic scope" value="Eukaryota"/>
</dbReference>
<dbReference type="eggNOG" id="KOG1158">
    <property type="taxonomic scope" value="Eukaryota"/>
</dbReference>
<dbReference type="HOGENOM" id="CLU_001570_7_0_1"/>
<dbReference type="OMA" id="LCTMGFR"/>
<dbReference type="OrthoDB" id="1470350at2759"/>
<dbReference type="Proteomes" id="UP000007963">
    <property type="component" value="Unassembled WGS sequence"/>
</dbReference>
<dbReference type="GO" id="GO:0005829">
    <property type="term" value="C:cytosol"/>
    <property type="evidence" value="ECO:0007669"/>
    <property type="project" value="TreeGrafter"/>
</dbReference>
<dbReference type="GO" id="GO:0070330">
    <property type="term" value="F:aromatase activity"/>
    <property type="evidence" value="ECO:0007669"/>
    <property type="project" value="InterPro"/>
</dbReference>
<dbReference type="GO" id="GO:0050660">
    <property type="term" value="F:flavin adenine dinucleotide binding"/>
    <property type="evidence" value="ECO:0007669"/>
    <property type="project" value="TreeGrafter"/>
</dbReference>
<dbReference type="GO" id="GO:0010181">
    <property type="term" value="F:FMN binding"/>
    <property type="evidence" value="ECO:0007669"/>
    <property type="project" value="InterPro"/>
</dbReference>
<dbReference type="GO" id="GO:0020037">
    <property type="term" value="F:heme binding"/>
    <property type="evidence" value="ECO:0007669"/>
    <property type="project" value="InterPro"/>
</dbReference>
<dbReference type="GO" id="GO:0005506">
    <property type="term" value="F:iron ion binding"/>
    <property type="evidence" value="ECO:0007669"/>
    <property type="project" value="InterPro"/>
</dbReference>
<dbReference type="GO" id="GO:0003958">
    <property type="term" value="F:NADPH-hemoprotein reductase activity"/>
    <property type="evidence" value="ECO:0007669"/>
    <property type="project" value="UniProtKB-EC"/>
</dbReference>
<dbReference type="CDD" id="cd06206">
    <property type="entry name" value="bifunctional_CYPOR"/>
    <property type="match status" value="1"/>
</dbReference>
<dbReference type="CDD" id="cd11068">
    <property type="entry name" value="CYP120A1"/>
    <property type="match status" value="1"/>
</dbReference>
<dbReference type="FunFam" id="1.10.630.10:FF:000040">
    <property type="entry name" value="Bifunctional cytochrome P450/NADPH--P450 reductase"/>
    <property type="match status" value="1"/>
</dbReference>
<dbReference type="Gene3D" id="3.40.50.360">
    <property type="match status" value="1"/>
</dbReference>
<dbReference type="Gene3D" id="1.10.630.10">
    <property type="entry name" value="Cytochrome P450"/>
    <property type="match status" value="1"/>
</dbReference>
<dbReference type="Gene3D" id="1.20.990.10">
    <property type="entry name" value="NADPH-cytochrome p450 Reductase, Chain A, domain 3"/>
    <property type="match status" value="1"/>
</dbReference>
<dbReference type="Gene3D" id="3.40.50.80">
    <property type="entry name" value="Nucleotide-binding domain of ferredoxin-NADP reductase (FNR) module"/>
    <property type="match status" value="1"/>
</dbReference>
<dbReference type="Gene3D" id="2.40.30.10">
    <property type="entry name" value="Translation factors"/>
    <property type="match status" value="1"/>
</dbReference>
<dbReference type="InterPro" id="IPR023206">
    <property type="entry name" value="Bifunctional_P450_P450_red"/>
</dbReference>
<dbReference type="InterPro" id="IPR003097">
    <property type="entry name" value="CysJ-like_FAD-binding"/>
</dbReference>
<dbReference type="InterPro" id="IPR001128">
    <property type="entry name" value="Cyt_P450"/>
</dbReference>
<dbReference type="InterPro" id="IPR017972">
    <property type="entry name" value="Cyt_P450_CS"/>
</dbReference>
<dbReference type="InterPro" id="IPR002401">
    <property type="entry name" value="Cyt_P450_E_grp-I"/>
</dbReference>
<dbReference type="InterPro" id="IPR036396">
    <property type="entry name" value="Cyt_P450_sf"/>
</dbReference>
<dbReference type="InterPro" id="IPR017927">
    <property type="entry name" value="FAD-bd_FR_type"/>
</dbReference>
<dbReference type="InterPro" id="IPR008254">
    <property type="entry name" value="Flavodoxin/NO_synth"/>
</dbReference>
<dbReference type="InterPro" id="IPR029039">
    <property type="entry name" value="Flavoprotein-like_sf"/>
</dbReference>
<dbReference type="InterPro" id="IPR039261">
    <property type="entry name" value="FNR_nucleotide-bd"/>
</dbReference>
<dbReference type="InterPro" id="IPR023173">
    <property type="entry name" value="NADPH_Cyt_P450_Rdtase_alpha"/>
</dbReference>
<dbReference type="InterPro" id="IPR001433">
    <property type="entry name" value="OxRdtase_FAD/NAD-bd"/>
</dbReference>
<dbReference type="InterPro" id="IPR017938">
    <property type="entry name" value="Riboflavin_synthase-like_b-brl"/>
</dbReference>
<dbReference type="PANTHER" id="PTHR19384:SF127">
    <property type="entry name" value="BIFUNCTIONAL CYTOCHROME P450_NADPH--P450 REDUCTASE"/>
    <property type="match status" value="1"/>
</dbReference>
<dbReference type="PANTHER" id="PTHR19384">
    <property type="entry name" value="NITRIC OXIDE SYNTHASE-RELATED"/>
    <property type="match status" value="1"/>
</dbReference>
<dbReference type="Pfam" id="PF00667">
    <property type="entry name" value="FAD_binding_1"/>
    <property type="match status" value="1"/>
</dbReference>
<dbReference type="Pfam" id="PF00258">
    <property type="entry name" value="Flavodoxin_1"/>
    <property type="match status" value="1"/>
</dbReference>
<dbReference type="Pfam" id="PF00175">
    <property type="entry name" value="NAD_binding_1"/>
    <property type="match status" value="1"/>
</dbReference>
<dbReference type="Pfam" id="PF00067">
    <property type="entry name" value="p450"/>
    <property type="match status" value="1"/>
</dbReference>
<dbReference type="PIRSF" id="PIRSF000209">
    <property type="entry name" value="Bifunctional_P450_P450R"/>
    <property type="match status" value="1"/>
</dbReference>
<dbReference type="PRINTS" id="PR00463">
    <property type="entry name" value="EP450I"/>
</dbReference>
<dbReference type="PRINTS" id="PR00385">
    <property type="entry name" value="P450"/>
</dbReference>
<dbReference type="SUPFAM" id="SSF48264">
    <property type="entry name" value="Cytochrome P450"/>
    <property type="match status" value="1"/>
</dbReference>
<dbReference type="SUPFAM" id="SSF52343">
    <property type="entry name" value="Ferredoxin reductase-like, C-terminal NADP-linked domain"/>
    <property type="match status" value="1"/>
</dbReference>
<dbReference type="SUPFAM" id="SSF52218">
    <property type="entry name" value="Flavoproteins"/>
    <property type="match status" value="1"/>
</dbReference>
<dbReference type="SUPFAM" id="SSF63380">
    <property type="entry name" value="Riboflavin synthase domain-like"/>
    <property type="match status" value="1"/>
</dbReference>
<dbReference type="PROSITE" id="PS00086">
    <property type="entry name" value="CYTOCHROME_P450"/>
    <property type="match status" value="1"/>
</dbReference>
<dbReference type="PROSITE" id="PS51384">
    <property type="entry name" value="FAD_FR"/>
    <property type="match status" value="1"/>
</dbReference>
<dbReference type="PROSITE" id="PS50902">
    <property type="entry name" value="FLAVODOXIN_LIKE"/>
    <property type="match status" value="1"/>
</dbReference>
<organism>
    <name type="scientific">Aspergillus terreus (strain NIH 2624 / FGSC A1156)</name>
    <dbReference type="NCBI Taxonomy" id="341663"/>
    <lineage>
        <taxon>Eukaryota</taxon>
        <taxon>Fungi</taxon>
        <taxon>Dikarya</taxon>
        <taxon>Ascomycota</taxon>
        <taxon>Pezizomycotina</taxon>
        <taxon>Eurotiomycetes</taxon>
        <taxon>Eurotiomycetidae</taxon>
        <taxon>Eurotiales</taxon>
        <taxon>Aspergillaceae</taxon>
        <taxon>Aspergillus</taxon>
        <taxon>Aspergillus subgen. Circumdati</taxon>
    </lineage>
</organism>
<proteinExistence type="evidence at protein level"/>
<keyword id="KW-0249">Electron transport</keyword>
<keyword id="KW-0274">FAD</keyword>
<keyword id="KW-0285">Flavoprotein</keyword>
<keyword id="KW-0288">FMN</keyword>
<keyword id="KW-0349">Heme</keyword>
<keyword id="KW-0408">Iron</keyword>
<keyword id="KW-0479">Metal-binding</keyword>
<keyword id="KW-0503">Monooxygenase</keyword>
<keyword id="KW-0521">NADP</keyword>
<keyword id="KW-0560">Oxidoreductase</keyword>
<keyword id="KW-1185">Reference proteome</keyword>
<keyword id="KW-0813">Transport</keyword>
<evidence type="ECO:0000250" key="1">
    <source>
        <dbReference type="UniProtKB" id="P14779"/>
    </source>
</evidence>
<evidence type="ECO:0000250" key="2">
    <source>
        <dbReference type="UniProtKB" id="Q9Y8G7"/>
    </source>
</evidence>
<evidence type="ECO:0000255" key="3">
    <source>
        <dbReference type="PROSITE-ProRule" id="PRU00088"/>
    </source>
</evidence>
<evidence type="ECO:0000255" key="4">
    <source>
        <dbReference type="PROSITE-ProRule" id="PRU00716"/>
    </source>
</evidence>
<evidence type="ECO:0000256" key="5">
    <source>
        <dbReference type="SAM" id="MobiDB-lite"/>
    </source>
</evidence>
<evidence type="ECO:0000269" key="6">
    <source>
    </source>
</evidence>
<evidence type="ECO:0000269" key="7">
    <source>
    </source>
</evidence>
<evidence type="ECO:0000303" key="8">
    <source>
    </source>
</evidence>
<evidence type="ECO:0000305" key="9"/>
<sequence length="1050" mass="116205">MIKETEQIPGPRPLPVVGNLFDMDLEHGLECLIRLADDFGPLFQITINGEKQIFATSQALVDELCDESRFHKAVMGGLEKLRMLASDGLFTAYHGERGWGIAHRILVPAFGPLRIRNMFEEMNDVAQQLCLKWARQGSSTSINITDDFTRLTLDTIALCTMNFRLNSFYNNETMHPFVKSMLYVLRESDIQSMLPGIANCIRVKARSRMSKHIQLMRNMARGIIQERRDQAEPVDDLLNTLLNGRDPVTGEGMSDDLIINNVITFLIAGHETTSGLLSFTFYYLLQNPHILERAQNEVDEVTGGERITVQHLGRLTYIDAILKESLRLMPTAPAFTVTPKKPEVLGGAWAIDAGQAVNVLLPVCLRDRSVFGPDADEFRPERMLEENFSKLPPNSWKPFGNGERSCIGRAFAWQEAQLVVAMVLQTFDLVPDDPSYKLRIKETLTIKPDGFRVRATLRRGQSATGLSQGSMSASGATSSVASPGPPAATGAQSNPAGGQRISFFYGSNSGTCKALAHRLASSLMGRGFTEQKLAALDTVVGNLPTDQPVIIVTTSYDGRPTDDAEEFVRWLESKRPVLQGVSYAVFGCGHHDWAKTFYRIPILIDDLMHKAGATRLTALGTANAAVSDLFSDLELWEETNLLPALREAFPPSNSSDVESSEPHQLQICVSKPRRVDMHRGLVEAKVTAVRTLTSPDSPEKRHVEFHVQGDTTWRPGDHVNILPVNPLSTVSRVLAYFQLAPDHSITVNSFNTQGLPSATPVSATELFSSFVELSQPATRKNLKALAMAAESKTDEQELIRLHDSYDALVRDKRVSVLDILERFPSISLPIGIFISMLPPLRLRTYSLSMAPSFKPSHGSLTFSVINEPAWSGNGQYLGVGSNYLASLTPGSLLYLSPRPAKDAFHLPADQFNTPIIMICAGSGLAPFMGFIQERMTWLKQGRPLAKGLLFFGCRGPHLDDLYYEELSEFEDAGVVEVHRAYSRAPDDVRAKGCRHVQHRLVTEAEAVRDHWGRNAIVYVCGSSNMARGVQTVLEEILGTLPPERYVAEIF</sequence>
<gene>
    <name evidence="8" type="primary">CYP505E3</name>
    <name type="ORF">ATEG_00065</name>
</gene>
<reference key="1">
    <citation type="submission" date="2005-09" db="EMBL/GenBank/DDBJ databases">
        <title>Annotation of the Aspergillus terreus NIH2624 genome.</title>
        <authorList>
            <person name="Birren B.W."/>
            <person name="Lander E.S."/>
            <person name="Galagan J.E."/>
            <person name="Nusbaum C."/>
            <person name="Devon K."/>
            <person name="Henn M."/>
            <person name="Ma L.-J."/>
            <person name="Jaffe D.B."/>
            <person name="Butler J."/>
            <person name="Alvarez P."/>
            <person name="Gnerre S."/>
            <person name="Grabherr M."/>
            <person name="Kleber M."/>
            <person name="Mauceli E.W."/>
            <person name="Brockman W."/>
            <person name="Rounsley S."/>
            <person name="Young S.K."/>
            <person name="LaButti K."/>
            <person name="Pushparaj V."/>
            <person name="DeCaprio D."/>
            <person name="Crawford M."/>
            <person name="Koehrsen M."/>
            <person name="Engels R."/>
            <person name="Montgomery P."/>
            <person name="Pearson M."/>
            <person name="Howarth C."/>
            <person name="Larson L."/>
            <person name="Luoma S."/>
            <person name="White J."/>
            <person name="Alvarado L."/>
            <person name="Kodira C.D."/>
            <person name="Zeng Q."/>
            <person name="Oleary S."/>
            <person name="Yandava C."/>
            <person name="Denning D.W."/>
            <person name="Nierman W.C."/>
            <person name="Milne T."/>
            <person name="Madden K."/>
        </authorList>
    </citation>
    <scope>NUCLEOTIDE SEQUENCE [LARGE SCALE GENOMIC DNA]</scope>
    <source>
        <strain>NIH 2624 / FGSC A1156</strain>
    </source>
</reference>
<reference key="2">
    <citation type="journal article" date="2020" name="Angew. Chem. Int. Ed.">
        <title>CYP505E3: A novel self-sufficient omega-7 in-chain hydroxylase.</title>
        <authorList>
            <person name="Maseme M.J."/>
            <person name="Pennec A."/>
            <person name="van Marwijk J."/>
            <person name="Opperman D.J."/>
            <person name="Smit M.S."/>
        </authorList>
    </citation>
    <scope>FUNCTION</scope>
    <scope>CATALYTIC ACTIVITY</scope>
    <scope>BIOTECHNOLOGY</scope>
</reference>
<reference key="3">
    <citation type="journal article" date="2023" name="Appl. Microbiol. Biotechnol.">
        <title>Delineation of the CYP505E subfamily of fungal self-sufficient in-chain hydroxylating cytochrome P450 monooxygenases.</title>
        <authorList>
            <person name="Smit M.S."/>
            <person name="Maseme M.J."/>
            <person name="van Marwijk J."/>
            <person name="Aschenbrenner J.C."/>
            <person name="Opperman D.J."/>
        </authorList>
    </citation>
    <scope>FUNCTION</scope>
    <scope>CATALYTIC ACTIVITY</scope>
</reference>
<name>CYPE3_ASPTN</name>
<comment type="function">
    <text evidence="6 7">Self-sufficient cytochrome P450 monooxygenase that catalyzes the regioselective in-chain hydroxylation of alkanes, fatty alcohols, and fatty acids at the omega-7 position (PubMed:32147902, PubMed:36607403). Performs hydroxylation of C10-C16 n-alkanes and C12 and C14 fatty alcohols; and thereby enables the one step biocatalytic synthesis of rare alcohols such as 5-dodecanol and 7-tetradecanol (PubMed:32147902, PubMed:36607403). Converts 1-dodecanol into 1,5-dodecanediol as major product with very little sub-terminally hydroxylated products with the 1,4-dodecanediol and 1,6-dodecanediol more abundant (PubMed:32147902, PubMed:36607403). Does not use hexadecanediol nor decanoic acid as substrates (PubMed:32147902, PubMed:36607403). Converts dodecanoic acid to 5-hydroxydodecanoic acid which can be further converted into delta-dodecalactone by lactonization of the 5-hydroxy acid at low pH (PubMed:32147902, PubMed:36607403). Also gives sub-terminal hydroxylation of dodecanoic acid with 9-hydroxydodecanoic acid being the second most abundant product (PubMed:36607403). The C14 and C16 fatty acids are double hydroxylated to yield dihydroxy acids hydroxylated at both the omega-7 position and a sub-terminal position (omega-1, omega-2, or omega-3) (PubMed:32147902).</text>
</comment>
<comment type="catalytic activity">
    <reaction evidence="6 7">
        <text>2 oxidized [cytochrome P450] + NADPH = 2 reduced [cytochrome P450] + NADP(+) + H(+)</text>
        <dbReference type="Rhea" id="RHEA:24040"/>
        <dbReference type="Rhea" id="RHEA-COMP:14627"/>
        <dbReference type="Rhea" id="RHEA-COMP:14628"/>
        <dbReference type="ChEBI" id="CHEBI:15378"/>
        <dbReference type="ChEBI" id="CHEBI:55376"/>
        <dbReference type="ChEBI" id="CHEBI:57783"/>
        <dbReference type="ChEBI" id="CHEBI:58349"/>
        <dbReference type="ChEBI" id="CHEBI:60344"/>
        <dbReference type="EC" id="1.6.2.4"/>
    </reaction>
</comment>
<comment type="catalytic activity">
    <reaction evidence="6 7">
        <text>an organic molecule + reduced [NADPH--hemoprotein reductase] + O2 = an alcohol + oxidized [NADPH--hemoprotein reductase] + H2O + H(+)</text>
        <dbReference type="Rhea" id="RHEA:17149"/>
        <dbReference type="Rhea" id="RHEA-COMP:11964"/>
        <dbReference type="Rhea" id="RHEA-COMP:11965"/>
        <dbReference type="ChEBI" id="CHEBI:15377"/>
        <dbReference type="ChEBI" id="CHEBI:15378"/>
        <dbReference type="ChEBI" id="CHEBI:15379"/>
        <dbReference type="ChEBI" id="CHEBI:30879"/>
        <dbReference type="ChEBI" id="CHEBI:57618"/>
        <dbReference type="ChEBI" id="CHEBI:58210"/>
        <dbReference type="ChEBI" id="CHEBI:142491"/>
        <dbReference type="EC" id="1.14.14.1"/>
    </reaction>
</comment>
<comment type="catalytic activity">
    <reaction evidence="6">
        <text>decane + reduced [NADPH--hemoprotein reductase] + O2 = 3-decanol + oxidized [NADPH--hemoprotein reductase] + H2O + H(+)</text>
        <dbReference type="Rhea" id="RHEA:76735"/>
        <dbReference type="Rhea" id="RHEA-COMP:11964"/>
        <dbReference type="Rhea" id="RHEA-COMP:11965"/>
        <dbReference type="ChEBI" id="CHEBI:15377"/>
        <dbReference type="ChEBI" id="CHEBI:15378"/>
        <dbReference type="ChEBI" id="CHEBI:15379"/>
        <dbReference type="ChEBI" id="CHEBI:41808"/>
        <dbReference type="ChEBI" id="CHEBI:57618"/>
        <dbReference type="ChEBI" id="CHEBI:58210"/>
        <dbReference type="ChEBI" id="CHEBI:195405"/>
    </reaction>
    <physiologicalReaction direction="left-to-right" evidence="6">
        <dbReference type="Rhea" id="RHEA:76736"/>
    </physiologicalReaction>
</comment>
<comment type="catalytic activity">
    <reaction evidence="6">
        <text>dodecane + reduced [NADPH--hemoprotein reductase] + O2 = 5-dodecanol + oxidized [NADPH--hemoprotein reductase] + H2O + H(+)</text>
        <dbReference type="Rhea" id="RHEA:76739"/>
        <dbReference type="Rhea" id="RHEA-COMP:11964"/>
        <dbReference type="Rhea" id="RHEA-COMP:11965"/>
        <dbReference type="ChEBI" id="CHEBI:15377"/>
        <dbReference type="ChEBI" id="CHEBI:15378"/>
        <dbReference type="ChEBI" id="CHEBI:15379"/>
        <dbReference type="ChEBI" id="CHEBI:28817"/>
        <dbReference type="ChEBI" id="CHEBI:57618"/>
        <dbReference type="ChEBI" id="CHEBI:58210"/>
        <dbReference type="ChEBI" id="CHEBI:195406"/>
    </reaction>
    <physiologicalReaction direction="left-to-right" evidence="6">
        <dbReference type="Rhea" id="RHEA:76740"/>
    </physiologicalReaction>
</comment>
<comment type="catalytic activity">
    <reaction evidence="6">
        <text>tetradecane + reduced [NADPH--hemoprotein reductase] + O2 = 7-tetradecanol + oxidized [NADPH--hemoprotein reductase] + H2O + H(+)</text>
        <dbReference type="Rhea" id="RHEA:76743"/>
        <dbReference type="Rhea" id="RHEA-COMP:11964"/>
        <dbReference type="Rhea" id="RHEA-COMP:11965"/>
        <dbReference type="ChEBI" id="CHEBI:15377"/>
        <dbReference type="ChEBI" id="CHEBI:15378"/>
        <dbReference type="ChEBI" id="CHEBI:15379"/>
        <dbReference type="ChEBI" id="CHEBI:41253"/>
        <dbReference type="ChEBI" id="CHEBI:57618"/>
        <dbReference type="ChEBI" id="CHEBI:58210"/>
        <dbReference type="ChEBI" id="CHEBI:195412"/>
    </reaction>
    <physiologicalReaction direction="left-to-right" evidence="6">
        <dbReference type="Rhea" id="RHEA:76744"/>
    </physiologicalReaction>
</comment>
<comment type="catalytic activity">
    <reaction evidence="6">
        <text>hexadecane + reduced [NADPH--hemoprotein reductase] + O2 = 9-hexadecanol + oxidized [NADPH--hemoprotein reductase] + H2O + H(+)</text>
        <dbReference type="Rhea" id="RHEA:76747"/>
        <dbReference type="Rhea" id="RHEA-COMP:11964"/>
        <dbReference type="Rhea" id="RHEA-COMP:11965"/>
        <dbReference type="ChEBI" id="CHEBI:15377"/>
        <dbReference type="ChEBI" id="CHEBI:15378"/>
        <dbReference type="ChEBI" id="CHEBI:15379"/>
        <dbReference type="ChEBI" id="CHEBI:45296"/>
        <dbReference type="ChEBI" id="CHEBI:57618"/>
        <dbReference type="ChEBI" id="CHEBI:58210"/>
        <dbReference type="ChEBI" id="CHEBI:197398"/>
    </reaction>
    <physiologicalReaction direction="left-to-right" evidence="6">
        <dbReference type="Rhea" id="RHEA:76748"/>
    </physiologicalReaction>
</comment>
<comment type="catalytic activity">
    <reaction evidence="6 7">
        <text>dodecanoate + reduced [NADPH--hemoprotein reductase] + O2 = 5-hydroxydodecanoate + oxidized [NADPH--hemoprotein reductase] + H2O + H(+)</text>
        <dbReference type="Rhea" id="RHEA:76723"/>
        <dbReference type="Rhea" id="RHEA-COMP:11964"/>
        <dbReference type="Rhea" id="RHEA-COMP:11965"/>
        <dbReference type="ChEBI" id="CHEBI:15377"/>
        <dbReference type="ChEBI" id="CHEBI:15378"/>
        <dbReference type="ChEBI" id="CHEBI:15379"/>
        <dbReference type="ChEBI" id="CHEBI:18262"/>
        <dbReference type="ChEBI" id="CHEBI:57618"/>
        <dbReference type="ChEBI" id="CHEBI:58210"/>
        <dbReference type="ChEBI" id="CHEBI:195418"/>
    </reaction>
    <physiologicalReaction direction="left-to-right" evidence="6 7">
        <dbReference type="Rhea" id="RHEA:76724"/>
    </physiologicalReaction>
</comment>
<comment type="catalytic activity">
    <reaction evidence="6 7">
        <text>tetradecanoate + reduced [NADPH--hemoprotein reductase] + O2 = 7-hydroxytetradecanoate + oxidized [NADPH--hemoprotein reductase] + H2O + H(+)</text>
        <dbReference type="Rhea" id="RHEA:76727"/>
        <dbReference type="Rhea" id="RHEA-COMP:11964"/>
        <dbReference type="Rhea" id="RHEA-COMP:11965"/>
        <dbReference type="ChEBI" id="CHEBI:15377"/>
        <dbReference type="ChEBI" id="CHEBI:15378"/>
        <dbReference type="ChEBI" id="CHEBI:15379"/>
        <dbReference type="ChEBI" id="CHEBI:30807"/>
        <dbReference type="ChEBI" id="CHEBI:57618"/>
        <dbReference type="ChEBI" id="CHEBI:58210"/>
        <dbReference type="ChEBI" id="CHEBI:195419"/>
    </reaction>
    <physiologicalReaction direction="left-to-right" evidence="6 7">
        <dbReference type="Rhea" id="RHEA:76728"/>
    </physiologicalReaction>
</comment>
<comment type="catalytic activity">
    <reaction evidence="7">
        <text>hexadecanoate + reduced [NADPH--hemoprotein reductase] + O2 = 9-hydroxyhexadecanoate + oxidized [NADPH--hemoprotein reductase] + H2O + H(+)</text>
        <dbReference type="Rhea" id="RHEA:76791"/>
        <dbReference type="Rhea" id="RHEA-COMP:11964"/>
        <dbReference type="Rhea" id="RHEA-COMP:11965"/>
        <dbReference type="ChEBI" id="CHEBI:7896"/>
        <dbReference type="ChEBI" id="CHEBI:15377"/>
        <dbReference type="ChEBI" id="CHEBI:15378"/>
        <dbReference type="ChEBI" id="CHEBI:15379"/>
        <dbReference type="ChEBI" id="CHEBI:57618"/>
        <dbReference type="ChEBI" id="CHEBI:58210"/>
        <dbReference type="ChEBI" id="CHEBI:195420"/>
    </reaction>
    <physiologicalReaction direction="left-to-right" evidence="7">
        <dbReference type="Rhea" id="RHEA:76792"/>
    </physiologicalReaction>
</comment>
<comment type="catalytic activity">
    <reaction evidence="6">
        <text>decan-1-ol + reduced [NADPH--hemoprotein reductase] + O2 = 1,3-decanediol + oxidized [NADPH--hemoprotein reductase] + H2O + H(+)</text>
        <dbReference type="Rhea" id="RHEA:76755"/>
        <dbReference type="Rhea" id="RHEA-COMP:11964"/>
        <dbReference type="Rhea" id="RHEA-COMP:11965"/>
        <dbReference type="ChEBI" id="CHEBI:15377"/>
        <dbReference type="ChEBI" id="CHEBI:15378"/>
        <dbReference type="ChEBI" id="CHEBI:15379"/>
        <dbReference type="ChEBI" id="CHEBI:28903"/>
        <dbReference type="ChEBI" id="CHEBI:57618"/>
        <dbReference type="ChEBI" id="CHEBI:58210"/>
        <dbReference type="ChEBI" id="CHEBI:195415"/>
    </reaction>
    <physiologicalReaction direction="left-to-right" evidence="6">
        <dbReference type="Rhea" id="RHEA:76756"/>
    </physiologicalReaction>
</comment>
<comment type="catalytic activity">
    <reaction evidence="6">
        <text>decan-1-ol + reduced [NADPH--hemoprotein reductase] + O2 = 1,7-decanediol + oxidized [NADPH--hemoprotein reductase] + H2O + H(+)</text>
        <dbReference type="Rhea" id="RHEA:76775"/>
        <dbReference type="Rhea" id="RHEA-COMP:11964"/>
        <dbReference type="Rhea" id="RHEA-COMP:11965"/>
        <dbReference type="ChEBI" id="CHEBI:15377"/>
        <dbReference type="ChEBI" id="CHEBI:15378"/>
        <dbReference type="ChEBI" id="CHEBI:15379"/>
        <dbReference type="ChEBI" id="CHEBI:28903"/>
        <dbReference type="ChEBI" id="CHEBI:57618"/>
        <dbReference type="ChEBI" id="CHEBI:58210"/>
        <dbReference type="ChEBI" id="CHEBI:195438"/>
    </reaction>
    <physiologicalReaction direction="left-to-right" evidence="6">
        <dbReference type="Rhea" id="RHEA:76776"/>
    </physiologicalReaction>
</comment>
<comment type="catalytic activity">
    <reaction evidence="6 7">
        <text>dodecan-1-ol + reduced [NADPH--hemoprotein reductase] + O2 = 1,5-dodecanediol + oxidized [NADPH--hemoprotein reductase] + H2O + H(+)</text>
        <dbReference type="Rhea" id="RHEA:76759"/>
        <dbReference type="Rhea" id="RHEA-COMP:11964"/>
        <dbReference type="Rhea" id="RHEA-COMP:11965"/>
        <dbReference type="ChEBI" id="CHEBI:15377"/>
        <dbReference type="ChEBI" id="CHEBI:15378"/>
        <dbReference type="ChEBI" id="CHEBI:15379"/>
        <dbReference type="ChEBI" id="CHEBI:28878"/>
        <dbReference type="ChEBI" id="CHEBI:57618"/>
        <dbReference type="ChEBI" id="CHEBI:58210"/>
        <dbReference type="ChEBI" id="CHEBI:195414"/>
    </reaction>
    <physiologicalReaction direction="left-to-right" evidence="6 7">
        <dbReference type="Rhea" id="RHEA:76760"/>
    </physiologicalReaction>
</comment>
<comment type="catalytic activity">
    <reaction evidence="7">
        <text>dodecan-1-ol + reduced [NADPH--hemoprotein reductase] + O2 = 1,4-dodecanediol + oxidized [NADPH--hemoprotein reductase] + H2O + H(+)</text>
        <dbReference type="Rhea" id="RHEA:76763"/>
        <dbReference type="Rhea" id="RHEA-COMP:11964"/>
        <dbReference type="Rhea" id="RHEA-COMP:11965"/>
        <dbReference type="ChEBI" id="CHEBI:15377"/>
        <dbReference type="ChEBI" id="CHEBI:15378"/>
        <dbReference type="ChEBI" id="CHEBI:15379"/>
        <dbReference type="ChEBI" id="CHEBI:28878"/>
        <dbReference type="ChEBI" id="CHEBI:57618"/>
        <dbReference type="ChEBI" id="CHEBI:58210"/>
        <dbReference type="ChEBI" id="CHEBI:195422"/>
    </reaction>
    <physiologicalReaction direction="left-to-right" evidence="7">
        <dbReference type="Rhea" id="RHEA:76764"/>
    </physiologicalReaction>
</comment>
<comment type="catalytic activity">
    <reaction evidence="7">
        <text>dodecan-1-ol + reduced [NADPH--hemoprotein reductase] + O2 = 1,6-dodecanediol + oxidized [NADPH--hemoprotein reductase] + H2O + H(+)</text>
        <dbReference type="Rhea" id="RHEA:76779"/>
        <dbReference type="Rhea" id="RHEA-COMP:11964"/>
        <dbReference type="Rhea" id="RHEA-COMP:11965"/>
        <dbReference type="ChEBI" id="CHEBI:15377"/>
        <dbReference type="ChEBI" id="CHEBI:15378"/>
        <dbReference type="ChEBI" id="CHEBI:15379"/>
        <dbReference type="ChEBI" id="CHEBI:28878"/>
        <dbReference type="ChEBI" id="CHEBI:57618"/>
        <dbReference type="ChEBI" id="CHEBI:58210"/>
        <dbReference type="ChEBI" id="CHEBI:195445"/>
    </reaction>
    <physiologicalReaction direction="left-to-right" evidence="7">
        <dbReference type="Rhea" id="RHEA:76780"/>
    </physiologicalReaction>
</comment>
<comment type="cofactor">
    <cofactor evidence="2">
        <name>FAD</name>
        <dbReference type="ChEBI" id="CHEBI:57692"/>
    </cofactor>
    <text evidence="2">Binds 1 FAD.</text>
</comment>
<comment type="cofactor">
    <cofactor evidence="2">
        <name>FMN</name>
        <dbReference type="ChEBI" id="CHEBI:58210"/>
    </cofactor>
    <text evidence="2">Binds 1 FMN.</text>
</comment>
<comment type="cofactor">
    <cofactor evidence="2">
        <name>heme</name>
        <dbReference type="ChEBI" id="CHEBI:30413"/>
    </cofactor>
</comment>
<comment type="biotechnology">
    <text evidence="6">CYP505E3 can be used to synthesize the high-value flavor compound delta-dodecalactone via two routes. The first is the conversion of dodecanoic acid into 5-hydroxydodecanoic acid (24% regioselectivity), which at low pH lactonises to delta-dodecalactone. The second is the conversion of 1-dodecanol into 1,5-dodecanediol (55% regioselectivity), which can be converted into delta-dodecalactone by horse liver alcohol dehydrogenase.</text>
</comment>
<comment type="similarity">
    <text evidence="9">In the N-terminal section; belongs to the cytochrome P450 family.</text>
</comment>
<accession>Q0D1W9</accession>
<feature type="chain" id="PRO_0000459035" description="Self-sufficient cytochrome P450 monooxygenase CYP505E3">
    <location>
        <begin position="1"/>
        <end position="1050"/>
    </location>
</feature>
<feature type="domain" description="Flavodoxin-like" evidence="3">
    <location>
        <begin position="501"/>
        <end position="641"/>
    </location>
</feature>
<feature type="domain" description="FAD-binding FR-type" evidence="4">
    <location>
        <begin position="679"/>
        <end position="907"/>
    </location>
</feature>
<feature type="region of interest" description="Disordered" evidence="5">
    <location>
        <begin position="459"/>
        <end position="495"/>
    </location>
</feature>
<feature type="compositionally biased region" description="Polar residues" evidence="5">
    <location>
        <begin position="459"/>
        <end position="481"/>
    </location>
</feature>
<feature type="binding site" description="axial binding residue" evidence="1">
    <location>
        <position position="406"/>
    </location>
    <ligand>
        <name>heme</name>
        <dbReference type="ChEBI" id="CHEBI:30413"/>
    </ligand>
    <ligandPart>
        <name>Fe</name>
        <dbReference type="ChEBI" id="CHEBI:18248"/>
    </ligandPart>
</feature>
<feature type="binding site" evidence="3">
    <location>
        <begin position="507"/>
        <end position="511"/>
    </location>
    <ligand>
        <name>FMN</name>
        <dbReference type="ChEBI" id="CHEBI:58210"/>
    </ligand>
</feature>
<feature type="binding site" evidence="3">
    <location>
        <begin position="585"/>
        <end position="617"/>
    </location>
    <ligand>
        <name>FMN</name>
        <dbReference type="ChEBI" id="CHEBI:58210"/>
    </ligand>
</feature>